<comment type="function">
    <text evidence="1">Involved in the biosynthesis of the osmoprotectant glycine betaine. Catalyzes the irreversible oxidation of betaine aldehyde to the corresponding acid.</text>
</comment>
<comment type="catalytic activity">
    <reaction evidence="1">
        <text>betaine aldehyde + NAD(+) + H2O = glycine betaine + NADH + 2 H(+)</text>
        <dbReference type="Rhea" id="RHEA:15305"/>
        <dbReference type="ChEBI" id="CHEBI:15377"/>
        <dbReference type="ChEBI" id="CHEBI:15378"/>
        <dbReference type="ChEBI" id="CHEBI:15710"/>
        <dbReference type="ChEBI" id="CHEBI:17750"/>
        <dbReference type="ChEBI" id="CHEBI:57540"/>
        <dbReference type="ChEBI" id="CHEBI:57945"/>
        <dbReference type="EC" id="1.2.1.8"/>
    </reaction>
    <physiologicalReaction direction="left-to-right" evidence="1">
        <dbReference type="Rhea" id="RHEA:15306"/>
    </physiologicalReaction>
</comment>
<comment type="cofactor">
    <cofactor evidence="1">
        <name>K(+)</name>
        <dbReference type="ChEBI" id="CHEBI:29103"/>
    </cofactor>
    <text evidence="1">Binds 2 potassium ions per subunit.</text>
</comment>
<comment type="pathway">
    <text evidence="1">Amine and polyamine biosynthesis; betaine biosynthesis via choline pathway; betaine from betaine aldehyde: step 1/1.</text>
</comment>
<comment type="subunit">
    <text evidence="1">Dimer of dimers.</text>
</comment>
<comment type="similarity">
    <text evidence="1">Belongs to the aldehyde dehydrogenase family.</text>
</comment>
<keyword id="KW-0479">Metal-binding</keyword>
<keyword id="KW-0520">NAD</keyword>
<keyword id="KW-0521">NADP</keyword>
<keyword id="KW-0558">Oxidation</keyword>
<keyword id="KW-0560">Oxidoreductase</keyword>
<keyword id="KW-0630">Potassium</keyword>
<keyword id="KW-1185">Reference proteome</keyword>
<gene>
    <name evidence="1" type="primary">betB</name>
    <name type="ordered locus">YPO1166</name>
    <name type="ordered locus">YP_0993</name>
</gene>
<name>BETB_YERPE</name>
<organism>
    <name type="scientific">Yersinia pestis</name>
    <dbReference type="NCBI Taxonomy" id="632"/>
    <lineage>
        <taxon>Bacteria</taxon>
        <taxon>Pseudomonadati</taxon>
        <taxon>Pseudomonadota</taxon>
        <taxon>Gammaproteobacteria</taxon>
        <taxon>Enterobacterales</taxon>
        <taxon>Yersiniaceae</taxon>
        <taxon>Yersinia</taxon>
    </lineage>
</organism>
<protein>
    <recommendedName>
        <fullName evidence="1">Betaine aldehyde dehydrogenase</fullName>
        <shortName evidence="1">BADH</shortName>
        <ecNumber evidence="1">1.2.1.8</ecNumber>
    </recommendedName>
</protein>
<reference key="1">
    <citation type="journal article" date="2001" name="Nature">
        <title>Genome sequence of Yersinia pestis, the causative agent of plague.</title>
        <authorList>
            <person name="Parkhill J."/>
            <person name="Wren B.W."/>
            <person name="Thomson N.R."/>
            <person name="Titball R.W."/>
            <person name="Holden M.T.G."/>
            <person name="Prentice M.B."/>
            <person name="Sebaihia M."/>
            <person name="James K.D."/>
            <person name="Churcher C.M."/>
            <person name="Mungall K.L."/>
            <person name="Baker S."/>
            <person name="Basham D."/>
            <person name="Bentley S.D."/>
            <person name="Brooks K."/>
            <person name="Cerdeno-Tarraga A.-M."/>
            <person name="Chillingworth T."/>
            <person name="Cronin A."/>
            <person name="Davies R.M."/>
            <person name="Davis P."/>
            <person name="Dougan G."/>
            <person name="Feltwell T."/>
            <person name="Hamlin N."/>
            <person name="Holroyd S."/>
            <person name="Jagels K."/>
            <person name="Karlyshev A.V."/>
            <person name="Leather S."/>
            <person name="Moule S."/>
            <person name="Oyston P.C.F."/>
            <person name="Quail M.A."/>
            <person name="Rutherford K.M."/>
            <person name="Simmonds M."/>
            <person name="Skelton J."/>
            <person name="Stevens K."/>
            <person name="Whitehead S."/>
            <person name="Barrell B.G."/>
        </authorList>
    </citation>
    <scope>NUCLEOTIDE SEQUENCE [LARGE SCALE GENOMIC DNA]</scope>
    <source>
        <strain>CO-92 / Biovar Orientalis</strain>
    </source>
</reference>
<reference key="2">
    <citation type="journal article" date="2004" name="DNA Res.">
        <title>Complete genome sequence of Yersinia pestis strain 91001, an isolate avirulent to humans.</title>
        <authorList>
            <person name="Song Y."/>
            <person name="Tong Z."/>
            <person name="Wang J."/>
            <person name="Wang L."/>
            <person name="Guo Z."/>
            <person name="Han Y."/>
            <person name="Zhang J."/>
            <person name="Pei D."/>
            <person name="Zhou D."/>
            <person name="Qin H."/>
            <person name="Pang X."/>
            <person name="Han Y."/>
            <person name="Zhai J."/>
            <person name="Li M."/>
            <person name="Cui B."/>
            <person name="Qi Z."/>
            <person name="Jin L."/>
            <person name="Dai R."/>
            <person name="Chen F."/>
            <person name="Li S."/>
            <person name="Ye C."/>
            <person name="Du Z."/>
            <person name="Lin W."/>
            <person name="Wang J."/>
            <person name="Yu J."/>
            <person name="Yang H."/>
            <person name="Wang J."/>
            <person name="Huang P."/>
            <person name="Yang R."/>
        </authorList>
    </citation>
    <scope>NUCLEOTIDE SEQUENCE [LARGE SCALE GENOMIC DNA]</scope>
    <source>
        <strain>91001 / Biovar Mediaevalis</strain>
    </source>
</reference>
<dbReference type="EC" id="1.2.1.8" evidence="1"/>
<dbReference type="EMBL" id="AL590842">
    <property type="protein sequence ID" value="CAL19830.1"/>
    <property type="molecule type" value="Genomic_DNA"/>
</dbReference>
<dbReference type="EMBL" id="AE017042">
    <property type="protein sequence ID" value="AAS61244.1"/>
    <property type="molecule type" value="Genomic_DNA"/>
</dbReference>
<dbReference type="PIR" id="AD0143">
    <property type="entry name" value="AD0143"/>
</dbReference>
<dbReference type="RefSeq" id="WP_002218281.1">
    <property type="nucleotide sequence ID" value="NZ_WHLN01000108.1"/>
</dbReference>
<dbReference type="RefSeq" id="YP_002346205.1">
    <property type="nucleotide sequence ID" value="NC_003143.1"/>
</dbReference>
<dbReference type="SMR" id="Q8ZGV9"/>
<dbReference type="STRING" id="214092.YPO1166"/>
<dbReference type="PaxDb" id="214092-YPO1166"/>
<dbReference type="EnsemblBacteria" id="AAS61244">
    <property type="protein sequence ID" value="AAS61244"/>
    <property type="gene ID" value="YP_0993"/>
</dbReference>
<dbReference type="GeneID" id="57977305"/>
<dbReference type="KEGG" id="ype:YPO1166"/>
<dbReference type="KEGG" id="ypm:YP_0993"/>
<dbReference type="PATRIC" id="fig|214092.21.peg.1463"/>
<dbReference type="eggNOG" id="COG1012">
    <property type="taxonomic scope" value="Bacteria"/>
</dbReference>
<dbReference type="HOGENOM" id="CLU_005391_0_1_6"/>
<dbReference type="OMA" id="CREGIRM"/>
<dbReference type="OrthoDB" id="9812625at2"/>
<dbReference type="UniPathway" id="UPA00529">
    <property type="reaction ID" value="UER00386"/>
</dbReference>
<dbReference type="Proteomes" id="UP000000815">
    <property type="component" value="Chromosome"/>
</dbReference>
<dbReference type="Proteomes" id="UP000001019">
    <property type="component" value="Chromosome"/>
</dbReference>
<dbReference type="GO" id="GO:0008802">
    <property type="term" value="F:betaine-aldehyde dehydrogenase (NAD+) activity"/>
    <property type="evidence" value="ECO:0000318"/>
    <property type="project" value="GO_Central"/>
</dbReference>
<dbReference type="GO" id="GO:0046872">
    <property type="term" value="F:metal ion binding"/>
    <property type="evidence" value="ECO:0007669"/>
    <property type="project" value="UniProtKB-KW"/>
</dbReference>
<dbReference type="GO" id="GO:0019285">
    <property type="term" value="P:glycine betaine biosynthetic process from choline"/>
    <property type="evidence" value="ECO:0007669"/>
    <property type="project" value="UniProtKB-UniRule"/>
</dbReference>
<dbReference type="CDD" id="cd07090">
    <property type="entry name" value="ALDH_F9_TMBADH"/>
    <property type="match status" value="1"/>
</dbReference>
<dbReference type="FunFam" id="3.40.309.10:FF:000014">
    <property type="entry name" value="NAD/NADP-dependent betaine aldehyde dehydrogenase"/>
    <property type="match status" value="1"/>
</dbReference>
<dbReference type="FunFam" id="3.40.605.10:FF:000007">
    <property type="entry name" value="NAD/NADP-dependent betaine aldehyde dehydrogenase"/>
    <property type="match status" value="1"/>
</dbReference>
<dbReference type="Gene3D" id="3.40.605.10">
    <property type="entry name" value="Aldehyde Dehydrogenase, Chain A, domain 1"/>
    <property type="match status" value="1"/>
</dbReference>
<dbReference type="Gene3D" id="3.40.309.10">
    <property type="entry name" value="Aldehyde Dehydrogenase, Chain A, domain 2"/>
    <property type="match status" value="1"/>
</dbReference>
<dbReference type="HAMAP" id="MF_00804">
    <property type="entry name" value="BADH"/>
    <property type="match status" value="1"/>
</dbReference>
<dbReference type="InterPro" id="IPR016161">
    <property type="entry name" value="Ald_DH/histidinol_DH"/>
</dbReference>
<dbReference type="InterPro" id="IPR016163">
    <property type="entry name" value="Ald_DH_C"/>
</dbReference>
<dbReference type="InterPro" id="IPR016160">
    <property type="entry name" value="Ald_DH_CS_CYS"/>
</dbReference>
<dbReference type="InterPro" id="IPR029510">
    <property type="entry name" value="Ald_DH_CS_GLU"/>
</dbReference>
<dbReference type="InterPro" id="IPR016162">
    <property type="entry name" value="Ald_DH_N"/>
</dbReference>
<dbReference type="InterPro" id="IPR015590">
    <property type="entry name" value="Aldehyde_DH_dom"/>
</dbReference>
<dbReference type="InterPro" id="IPR011264">
    <property type="entry name" value="BADH"/>
</dbReference>
<dbReference type="NCBIfam" id="TIGR01804">
    <property type="entry name" value="BADH"/>
    <property type="match status" value="1"/>
</dbReference>
<dbReference type="NCBIfam" id="NF009725">
    <property type="entry name" value="PRK13252.1"/>
    <property type="match status" value="1"/>
</dbReference>
<dbReference type="PANTHER" id="PTHR11699">
    <property type="entry name" value="ALDEHYDE DEHYDROGENASE-RELATED"/>
    <property type="match status" value="1"/>
</dbReference>
<dbReference type="Pfam" id="PF00171">
    <property type="entry name" value="Aldedh"/>
    <property type="match status" value="1"/>
</dbReference>
<dbReference type="SUPFAM" id="SSF53720">
    <property type="entry name" value="ALDH-like"/>
    <property type="match status" value="1"/>
</dbReference>
<dbReference type="PROSITE" id="PS00070">
    <property type="entry name" value="ALDEHYDE_DEHYDR_CYS"/>
    <property type="match status" value="1"/>
</dbReference>
<dbReference type="PROSITE" id="PS00687">
    <property type="entry name" value="ALDEHYDE_DEHYDR_GLU"/>
    <property type="match status" value="1"/>
</dbReference>
<feature type="chain" id="PRO_0000056561" description="Betaine aldehyde dehydrogenase">
    <location>
        <begin position="1"/>
        <end position="490"/>
    </location>
</feature>
<feature type="active site" description="Charge relay system" evidence="1">
    <location>
        <position position="162"/>
    </location>
</feature>
<feature type="active site" description="Proton acceptor" evidence="1">
    <location>
        <position position="252"/>
    </location>
</feature>
<feature type="active site" description="Nucleophile" evidence="1">
    <location>
        <position position="286"/>
    </location>
</feature>
<feature type="active site" description="Charge relay system" evidence="1">
    <location>
        <position position="464"/>
    </location>
</feature>
<feature type="binding site" evidence="1">
    <location>
        <position position="93"/>
    </location>
    <ligand>
        <name>K(+)</name>
        <dbReference type="ChEBI" id="CHEBI:29103"/>
        <label>1</label>
    </ligand>
</feature>
<feature type="binding site" evidence="1">
    <location>
        <begin position="150"/>
        <end position="152"/>
    </location>
    <ligand>
        <name>NAD(+)</name>
        <dbReference type="ChEBI" id="CHEBI:57540"/>
    </ligand>
</feature>
<feature type="binding site" evidence="1">
    <location>
        <begin position="176"/>
        <end position="179"/>
    </location>
    <ligand>
        <name>NAD(+)</name>
        <dbReference type="ChEBI" id="CHEBI:57540"/>
    </ligand>
</feature>
<feature type="binding site" evidence="1">
    <location>
        <position position="180"/>
    </location>
    <ligand>
        <name>K(+)</name>
        <dbReference type="ChEBI" id="CHEBI:29103"/>
        <label>1</label>
    </ligand>
</feature>
<feature type="binding site" evidence="1">
    <location>
        <begin position="230"/>
        <end position="233"/>
    </location>
    <ligand>
        <name>NAD(+)</name>
        <dbReference type="ChEBI" id="CHEBI:57540"/>
    </ligand>
</feature>
<feature type="binding site" evidence="1">
    <location>
        <position position="246"/>
    </location>
    <ligand>
        <name>K(+)</name>
        <dbReference type="ChEBI" id="CHEBI:29103"/>
        <label>2</label>
    </ligand>
</feature>
<feature type="binding site" evidence="1">
    <location>
        <position position="254"/>
    </location>
    <ligand>
        <name>NAD(+)</name>
        <dbReference type="ChEBI" id="CHEBI:57540"/>
    </ligand>
</feature>
<feature type="binding site" description="covalent" evidence="1">
    <location>
        <position position="286"/>
    </location>
    <ligand>
        <name>NAD(+)</name>
        <dbReference type="ChEBI" id="CHEBI:57540"/>
    </ligand>
</feature>
<feature type="binding site" evidence="1">
    <location>
        <position position="387"/>
    </location>
    <ligand>
        <name>NAD(+)</name>
        <dbReference type="ChEBI" id="CHEBI:57540"/>
    </ligand>
</feature>
<feature type="binding site" evidence="1">
    <location>
        <position position="457"/>
    </location>
    <ligand>
        <name>K(+)</name>
        <dbReference type="ChEBI" id="CHEBI:29103"/>
        <label>2</label>
    </ligand>
</feature>
<feature type="binding site" evidence="1">
    <location>
        <position position="460"/>
    </location>
    <ligand>
        <name>K(+)</name>
        <dbReference type="ChEBI" id="CHEBI:29103"/>
        <label>2</label>
    </ligand>
</feature>
<feature type="site" description="Seems to be a necessary countercharge to the potassium cations" evidence="1">
    <location>
        <position position="248"/>
    </location>
</feature>
<feature type="modified residue" description="Cysteine sulfenic acid (-SOH)" evidence="1">
    <location>
        <position position="286"/>
    </location>
</feature>
<sequence length="490" mass="52596">MSRYGLQKLYINGAYTDSTSGDTFDAVNPANGECIAQLQAANAQDVDKAVAAAKQGQPVWAAMTAMERSRILRRAVDILRDRNDELAAIETADTGKPLSETRSVDIVTGADVLEYYAGLIPALEGQQIPLRGSAFVYTRREPLGVVAGIGAWNYPLQIALWKSAPALAAGNAMIFKPSEVTSLTALKLAGIYTEAGLPAGVFNVLTGSGDQVGQMLTEHPGIAKVSFTGGIASGKKVMANAAGSTLKDVTMELGGKSPLIIFADADLDKAADIAMMANFYSSGQVCTNGTRVFVPQALQAAFEQKIVERVKRIHIGDPSDERTNFGPLVSFQHRDSVMRYIDSGKREGATLLIGGYSLTEGALAHGAYVAPTVFTHCRDDMQIVREEIFGPVMSILSYQSEEEVIRRANDTEYGLAAGVVTQDLNRAHRVIHQLQAGICWINTWGESAPEMPVGGYKHSGVGRENGISTLEHYTQIKSIQVELGSFNSVF</sequence>
<evidence type="ECO:0000255" key="1">
    <source>
        <dbReference type="HAMAP-Rule" id="MF_00804"/>
    </source>
</evidence>
<accession>Q8ZGV9</accession>
<accession>Q0WHN3</accession>
<accession>Q74W89</accession>
<proteinExistence type="inferred from homology"/>